<accession>Q7VS95</accession>
<feature type="chain" id="PRO_0000374715" description="Ribosomal protein uS12 methylthiotransferase RimO">
    <location>
        <begin position="1"/>
        <end position="439"/>
    </location>
</feature>
<feature type="domain" description="MTTase N-terminal" evidence="1">
    <location>
        <begin position="4"/>
        <end position="114"/>
    </location>
</feature>
<feature type="domain" description="Radical SAM core" evidence="2">
    <location>
        <begin position="133"/>
        <end position="370"/>
    </location>
</feature>
<feature type="domain" description="TRAM" evidence="1">
    <location>
        <begin position="373"/>
        <end position="439"/>
    </location>
</feature>
<feature type="binding site" evidence="1">
    <location>
        <position position="13"/>
    </location>
    <ligand>
        <name>[4Fe-4S] cluster</name>
        <dbReference type="ChEBI" id="CHEBI:49883"/>
        <label>1</label>
    </ligand>
</feature>
<feature type="binding site" evidence="1">
    <location>
        <position position="49"/>
    </location>
    <ligand>
        <name>[4Fe-4S] cluster</name>
        <dbReference type="ChEBI" id="CHEBI:49883"/>
        <label>1</label>
    </ligand>
</feature>
<feature type="binding site" evidence="1">
    <location>
        <position position="78"/>
    </location>
    <ligand>
        <name>[4Fe-4S] cluster</name>
        <dbReference type="ChEBI" id="CHEBI:49883"/>
        <label>1</label>
    </ligand>
</feature>
<feature type="binding site" evidence="1">
    <location>
        <position position="147"/>
    </location>
    <ligand>
        <name>[4Fe-4S] cluster</name>
        <dbReference type="ChEBI" id="CHEBI:49883"/>
        <label>2</label>
        <note>4Fe-4S-S-AdoMet</note>
    </ligand>
</feature>
<feature type="binding site" evidence="1">
    <location>
        <position position="151"/>
    </location>
    <ligand>
        <name>[4Fe-4S] cluster</name>
        <dbReference type="ChEBI" id="CHEBI:49883"/>
        <label>2</label>
        <note>4Fe-4S-S-AdoMet</note>
    </ligand>
</feature>
<feature type="binding site" evidence="1">
    <location>
        <position position="154"/>
    </location>
    <ligand>
        <name>[4Fe-4S] cluster</name>
        <dbReference type="ChEBI" id="CHEBI:49883"/>
        <label>2</label>
        <note>4Fe-4S-S-AdoMet</note>
    </ligand>
</feature>
<evidence type="ECO:0000255" key="1">
    <source>
        <dbReference type="HAMAP-Rule" id="MF_01865"/>
    </source>
</evidence>
<evidence type="ECO:0000255" key="2">
    <source>
        <dbReference type="PROSITE-ProRule" id="PRU01266"/>
    </source>
</evidence>
<name>RIMO_BORPE</name>
<dbReference type="EC" id="2.8.4.4" evidence="1"/>
<dbReference type="EMBL" id="BX640412">
    <property type="protein sequence ID" value="CAE44873.1"/>
    <property type="molecule type" value="Genomic_DNA"/>
</dbReference>
<dbReference type="RefSeq" id="NP_879393.1">
    <property type="nucleotide sequence ID" value="NC_002929.2"/>
</dbReference>
<dbReference type="RefSeq" id="WP_003807313.1">
    <property type="nucleotide sequence ID" value="NZ_CP039022.1"/>
</dbReference>
<dbReference type="SMR" id="Q7VS95"/>
<dbReference type="STRING" id="257313.BP0545"/>
<dbReference type="PaxDb" id="257313-BP0545"/>
<dbReference type="GeneID" id="93206481"/>
<dbReference type="KEGG" id="bpe:BP0545"/>
<dbReference type="PATRIC" id="fig|257313.5.peg.586"/>
<dbReference type="eggNOG" id="COG0621">
    <property type="taxonomic scope" value="Bacteria"/>
</dbReference>
<dbReference type="HOGENOM" id="CLU_018697_0_0_4"/>
<dbReference type="Proteomes" id="UP000002676">
    <property type="component" value="Chromosome"/>
</dbReference>
<dbReference type="GO" id="GO:0005829">
    <property type="term" value="C:cytosol"/>
    <property type="evidence" value="ECO:0007669"/>
    <property type="project" value="TreeGrafter"/>
</dbReference>
<dbReference type="GO" id="GO:0051539">
    <property type="term" value="F:4 iron, 4 sulfur cluster binding"/>
    <property type="evidence" value="ECO:0007669"/>
    <property type="project" value="UniProtKB-UniRule"/>
</dbReference>
<dbReference type="GO" id="GO:0035599">
    <property type="term" value="F:aspartic acid methylthiotransferase activity"/>
    <property type="evidence" value="ECO:0007669"/>
    <property type="project" value="TreeGrafter"/>
</dbReference>
<dbReference type="GO" id="GO:0046872">
    <property type="term" value="F:metal ion binding"/>
    <property type="evidence" value="ECO:0007669"/>
    <property type="project" value="UniProtKB-KW"/>
</dbReference>
<dbReference type="GO" id="GO:0103039">
    <property type="term" value="F:protein methylthiotransferase activity"/>
    <property type="evidence" value="ECO:0007669"/>
    <property type="project" value="UniProtKB-EC"/>
</dbReference>
<dbReference type="GO" id="GO:0006400">
    <property type="term" value="P:tRNA modification"/>
    <property type="evidence" value="ECO:0007669"/>
    <property type="project" value="InterPro"/>
</dbReference>
<dbReference type="CDD" id="cd01335">
    <property type="entry name" value="Radical_SAM"/>
    <property type="match status" value="1"/>
</dbReference>
<dbReference type="FunFam" id="2.40.50.140:FF:000060">
    <property type="entry name" value="Ribosomal protein S12 methylthiotransferase RimO"/>
    <property type="match status" value="1"/>
</dbReference>
<dbReference type="FunFam" id="3.40.50.12160:FF:000002">
    <property type="entry name" value="Ribosomal protein S12 methylthiotransferase RimO"/>
    <property type="match status" value="1"/>
</dbReference>
<dbReference type="FunFam" id="3.80.30.20:FF:000001">
    <property type="entry name" value="tRNA-2-methylthio-N(6)-dimethylallyladenosine synthase 2"/>
    <property type="match status" value="1"/>
</dbReference>
<dbReference type="Gene3D" id="3.40.50.12160">
    <property type="entry name" value="Methylthiotransferase, N-terminal domain"/>
    <property type="match status" value="1"/>
</dbReference>
<dbReference type="Gene3D" id="2.40.50.140">
    <property type="entry name" value="Nucleic acid-binding proteins"/>
    <property type="match status" value="1"/>
</dbReference>
<dbReference type="Gene3D" id="3.80.30.20">
    <property type="entry name" value="tm_1862 like domain"/>
    <property type="match status" value="1"/>
</dbReference>
<dbReference type="HAMAP" id="MF_01865">
    <property type="entry name" value="MTTase_RimO"/>
    <property type="match status" value="1"/>
</dbReference>
<dbReference type="InterPro" id="IPR006638">
    <property type="entry name" value="Elp3/MiaA/NifB-like_rSAM"/>
</dbReference>
<dbReference type="InterPro" id="IPR005839">
    <property type="entry name" value="Methylthiotransferase"/>
</dbReference>
<dbReference type="InterPro" id="IPR020612">
    <property type="entry name" value="Methylthiotransferase_CS"/>
</dbReference>
<dbReference type="InterPro" id="IPR013848">
    <property type="entry name" value="Methylthiotransferase_N"/>
</dbReference>
<dbReference type="InterPro" id="IPR038135">
    <property type="entry name" value="Methylthiotransferase_N_sf"/>
</dbReference>
<dbReference type="InterPro" id="IPR012340">
    <property type="entry name" value="NA-bd_OB-fold"/>
</dbReference>
<dbReference type="InterPro" id="IPR005840">
    <property type="entry name" value="Ribosomal_uS12_MeSTrfase_RimO"/>
</dbReference>
<dbReference type="InterPro" id="IPR007197">
    <property type="entry name" value="rSAM"/>
</dbReference>
<dbReference type="InterPro" id="IPR023404">
    <property type="entry name" value="rSAM_horseshoe"/>
</dbReference>
<dbReference type="InterPro" id="IPR002792">
    <property type="entry name" value="TRAM_dom"/>
</dbReference>
<dbReference type="NCBIfam" id="TIGR01125">
    <property type="entry name" value="30S ribosomal protein S12 methylthiotransferase RimO"/>
    <property type="match status" value="1"/>
</dbReference>
<dbReference type="NCBIfam" id="TIGR00089">
    <property type="entry name" value="MiaB/RimO family radical SAM methylthiotransferase"/>
    <property type="match status" value="1"/>
</dbReference>
<dbReference type="PANTHER" id="PTHR43837">
    <property type="entry name" value="RIBOSOMAL PROTEIN S12 METHYLTHIOTRANSFERASE RIMO"/>
    <property type="match status" value="1"/>
</dbReference>
<dbReference type="PANTHER" id="PTHR43837:SF1">
    <property type="entry name" value="RIBOSOMAL PROTEIN US12 METHYLTHIOTRANSFERASE RIMO"/>
    <property type="match status" value="1"/>
</dbReference>
<dbReference type="Pfam" id="PF04055">
    <property type="entry name" value="Radical_SAM"/>
    <property type="match status" value="1"/>
</dbReference>
<dbReference type="Pfam" id="PF18693">
    <property type="entry name" value="TRAM_2"/>
    <property type="match status" value="1"/>
</dbReference>
<dbReference type="Pfam" id="PF00919">
    <property type="entry name" value="UPF0004"/>
    <property type="match status" value="1"/>
</dbReference>
<dbReference type="SFLD" id="SFLDG01082">
    <property type="entry name" value="B12-binding_domain_containing"/>
    <property type="match status" value="1"/>
</dbReference>
<dbReference type="SFLD" id="SFLDG01061">
    <property type="entry name" value="methylthiotransferase"/>
    <property type="match status" value="1"/>
</dbReference>
<dbReference type="SFLD" id="SFLDF00274">
    <property type="entry name" value="ribosomal_protein_S12_methylth"/>
    <property type="match status" value="1"/>
</dbReference>
<dbReference type="SMART" id="SM00729">
    <property type="entry name" value="Elp3"/>
    <property type="match status" value="1"/>
</dbReference>
<dbReference type="SUPFAM" id="SSF102114">
    <property type="entry name" value="Radical SAM enzymes"/>
    <property type="match status" value="1"/>
</dbReference>
<dbReference type="PROSITE" id="PS51449">
    <property type="entry name" value="MTTASE_N"/>
    <property type="match status" value="1"/>
</dbReference>
<dbReference type="PROSITE" id="PS01278">
    <property type="entry name" value="MTTASE_RADICAL"/>
    <property type="match status" value="1"/>
</dbReference>
<dbReference type="PROSITE" id="PS51918">
    <property type="entry name" value="RADICAL_SAM"/>
    <property type="match status" value="1"/>
</dbReference>
<dbReference type="PROSITE" id="PS50926">
    <property type="entry name" value="TRAM"/>
    <property type="match status" value="1"/>
</dbReference>
<organism>
    <name type="scientific">Bordetella pertussis (strain Tohama I / ATCC BAA-589 / NCTC 13251)</name>
    <dbReference type="NCBI Taxonomy" id="257313"/>
    <lineage>
        <taxon>Bacteria</taxon>
        <taxon>Pseudomonadati</taxon>
        <taxon>Pseudomonadota</taxon>
        <taxon>Betaproteobacteria</taxon>
        <taxon>Burkholderiales</taxon>
        <taxon>Alcaligenaceae</taxon>
        <taxon>Bordetella</taxon>
    </lineage>
</organism>
<sequence>MSSPKVGFVSLGCPKALVDSERILTQLRTEGYEVTPEYNDADVVVVNTCGFIDSAKAESLEAIGEAIAENGKVIVTGCMGVEESVIRQVHPSVLAVTGPQQYEEVVRAVHGVAPPRQDHNPYLDLVPPQGVKLTPRHYAYLKISEGCNHRCSFCIIPSMRGDLVSRPVGDVLSEAERLVRAGVKELLVISQDTSAYGVDIKYRSGFWNGRPVKTRMTELCAALSELGVWTRLHYVYPYPHVDEVIGLMADGKVLPYLDIPFQHASPRILRAMKRPAFEDKTLARIKRWREECPDLTLRSTFIVGFPGETEEDFQYLLDWMSEAQLDRVGCFQYSPVEGAPANTLDNPVPDEVKQERWERFMEHQQAISTARLSTRVGREIDVLIDSVDEEGAVGRSSADAPEIDGCVYVDSEQPLKAGDMVRVRVTDSDEYDLWGERIA</sequence>
<comment type="function">
    <text evidence="1">Catalyzes the methylthiolation of an aspartic acid residue of ribosomal protein uS12.</text>
</comment>
<comment type="catalytic activity">
    <reaction evidence="1">
        <text>L-aspartate(89)-[ribosomal protein uS12]-hydrogen + (sulfur carrier)-SH + AH2 + 2 S-adenosyl-L-methionine = 3-methylsulfanyl-L-aspartate(89)-[ribosomal protein uS12]-hydrogen + (sulfur carrier)-H + 5'-deoxyadenosine + L-methionine + A + S-adenosyl-L-homocysteine + 2 H(+)</text>
        <dbReference type="Rhea" id="RHEA:37087"/>
        <dbReference type="Rhea" id="RHEA-COMP:10460"/>
        <dbReference type="Rhea" id="RHEA-COMP:10461"/>
        <dbReference type="Rhea" id="RHEA-COMP:14737"/>
        <dbReference type="Rhea" id="RHEA-COMP:14739"/>
        <dbReference type="ChEBI" id="CHEBI:13193"/>
        <dbReference type="ChEBI" id="CHEBI:15378"/>
        <dbReference type="ChEBI" id="CHEBI:17319"/>
        <dbReference type="ChEBI" id="CHEBI:17499"/>
        <dbReference type="ChEBI" id="CHEBI:29917"/>
        <dbReference type="ChEBI" id="CHEBI:29961"/>
        <dbReference type="ChEBI" id="CHEBI:57844"/>
        <dbReference type="ChEBI" id="CHEBI:57856"/>
        <dbReference type="ChEBI" id="CHEBI:59789"/>
        <dbReference type="ChEBI" id="CHEBI:64428"/>
        <dbReference type="ChEBI" id="CHEBI:73599"/>
        <dbReference type="EC" id="2.8.4.4"/>
    </reaction>
</comment>
<comment type="cofactor">
    <cofactor evidence="1">
        <name>[4Fe-4S] cluster</name>
        <dbReference type="ChEBI" id="CHEBI:49883"/>
    </cofactor>
    <text evidence="1">Binds 2 [4Fe-4S] clusters. One cluster is coordinated with 3 cysteines and an exchangeable S-adenosyl-L-methionine.</text>
</comment>
<comment type="subcellular location">
    <subcellularLocation>
        <location evidence="1">Cytoplasm</location>
    </subcellularLocation>
</comment>
<comment type="similarity">
    <text evidence="1">Belongs to the methylthiotransferase family. RimO subfamily.</text>
</comment>
<protein>
    <recommendedName>
        <fullName evidence="1">Ribosomal protein uS12 methylthiotransferase RimO</fullName>
        <shortName evidence="1">uS12 MTTase</shortName>
        <shortName evidence="1">uS12 methylthiotransferase</shortName>
        <ecNumber evidence="1">2.8.4.4</ecNumber>
    </recommendedName>
    <alternativeName>
        <fullName evidence="1">Ribosomal protein uS12 (aspartate-C(3))-methylthiotransferase</fullName>
    </alternativeName>
    <alternativeName>
        <fullName evidence="1">Ribosome maturation factor RimO</fullName>
    </alternativeName>
</protein>
<proteinExistence type="inferred from homology"/>
<keyword id="KW-0004">4Fe-4S</keyword>
<keyword id="KW-0963">Cytoplasm</keyword>
<keyword id="KW-0408">Iron</keyword>
<keyword id="KW-0411">Iron-sulfur</keyword>
<keyword id="KW-0479">Metal-binding</keyword>
<keyword id="KW-1185">Reference proteome</keyword>
<keyword id="KW-0949">S-adenosyl-L-methionine</keyword>
<keyword id="KW-0808">Transferase</keyword>
<gene>
    <name evidence="1" type="primary">rimO</name>
    <name type="ordered locus">BP0545</name>
</gene>
<reference key="1">
    <citation type="journal article" date="2003" name="Nat. Genet.">
        <title>Comparative analysis of the genome sequences of Bordetella pertussis, Bordetella parapertussis and Bordetella bronchiseptica.</title>
        <authorList>
            <person name="Parkhill J."/>
            <person name="Sebaihia M."/>
            <person name="Preston A."/>
            <person name="Murphy L.D."/>
            <person name="Thomson N.R."/>
            <person name="Harris D.E."/>
            <person name="Holden M.T.G."/>
            <person name="Churcher C.M."/>
            <person name="Bentley S.D."/>
            <person name="Mungall K.L."/>
            <person name="Cerdeno-Tarraga A.-M."/>
            <person name="Temple L."/>
            <person name="James K.D."/>
            <person name="Harris B."/>
            <person name="Quail M.A."/>
            <person name="Achtman M."/>
            <person name="Atkin R."/>
            <person name="Baker S."/>
            <person name="Basham D."/>
            <person name="Bason N."/>
            <person name="Cherevach I."/>
            <person name="Chillingworth T."/>
            <person name="Collins M."/>
            <person name="Cronin A."/>
            <person name="Davis P."/>
            <person name="Doggett J."/>
            <person name="Feltwell T."/>
            <person name="Goble A."/>
            <person name="Hamlin N."/>
            <person name="Hauser H."/>
            <person name="Holroyd S."/>
            <person name="Jagels K."/>
            <person name="Leather S."/>
            <person name="Moule S."/>
            <person name="Norberczak H."/>
            <person name="O'Neil S."/>
            <person name="Ormond D."/>
            <person name="Price C."/>
            <person name="Rabbinowitsch E."/>
            <person name="Rutter S."/>
            <person name="Sanders M."/>
            <person name="Saunders D."/>
            <person name="Seeger K."/>
            <person name="Sharp S."/>
            <person name="Simmonds M."/>
            <person name="Skelton J."/>
            <person name="Squares R."/>
            <person name="Squares S."/>
            <person name="Stevens K."/>
            <person name="Unwin L."/>
            <person name="Whitehead S."/>
            <person name="Barrell B.G."/>
            <person name="Maskell D.J."/>
        </authorList>
    </citation>
    <scope>NUCLEOTIDE SEQUENCE [LARGE SCALE GENOMIC DNA]</scope>
    <source>
        <strain>Tohama I / ATCC BAA-589 / NCTC 13251</strain>
    </source>
</reference>